<keyword id="KW-0007">Acetylation</keyword>
<keyword id="KW-0963">Cytoplasm</keyword>
<keyword id="KW-0413">Isomerase</keyword>
<keyword id="KW-0479">Metal-binding</keyword>
<keyword id="KW-0597">Phosphoprotein</keyword>
<keyword id="KW-1185">Reference proteome</keyword>
<keyword id="KW-0862">Zinc</keyword>
<protein>
    <recommendedName>
        <fullName>Mannose-6-phosphate isomerase</fullName>
        <ecNumber evidence="3">5.3.1.8</ecNumber>
    </recommendedName>
    <alternativeName>
        <fullName>Phosphohexomutase</fullName>
    </alternativeName>
    <alternativeName>
        <fullName evidence="3">Phosphomannose isomerase</fullName>
        <shortName evidence="3">PMI</shortName>
    </alternativeName>
</protein>
<name>MPI_RAT</name>
<reference key="1">
    <citation type="journal article" date="2004" name="Genome Res.">
        <title>The status, quality, and expansion of the NIH full-length cDNA project: the Mammalian Gene Collection (MGC).</title>
        <authorList>
            <consortium name="The MGC Project Team"/>
        </authorList>
    </citation>
    <scope>NUCLEOTIDE SEQUENCE [LARGE SCALE MRNA]</scope>
    <source>
        <tissue>Lung</tissue>
    </source>
</reference>
<evidence type="ECO:0000250" key="1"/>
<evidence type="ECO:0000250" key="2">
    <source>
        <dbReference type="UniProtKB" id="P34948"/>
    </source>
</evidence>
<evidence type="ECO:0000250" key="3">
    <source>
        <dbReference type="UniProtKB" id="P34949"/>
    </source>
</evidence>
<evidence type="ECO:0000250" key="4">
    <source>
        <dbReference type="UniProtKB" id="Q924M7"/>
    </source>
</evidence>
<evidence type="ECO:0000305" key="5"/>
<evidence type="ECO:0000312" key="6">
    <source>
        <dbReference type="RGD" id="3107"/>
    </source>
</evidence>
<dbReference type="EC" id="5.3.1.8" evidence="3"/>
<dbReference type="EMBL" id="BC079111">
    <property type="protein sequence ID" value="AAH79111.1"/>
    <property type="molecule type" value="mRNA"/>
</dbReference>
<dbReference type="RefSeq" id="NP_001004081.1">
    <property type="nucleotide sequence ID" value="NM_001004081.1"/>
</dbReference>
<dbReference type="SMR" id="Q68FX1"/>
<dbReference type="FunCoup" id="Q68FX1">
    <property type="interactions" value="2499"/>
</dbReference>
<dbReference type="STRING" id="10116.ENSRNOP00000025783"/>
<dbReference type="iPTMnet" id="Q68FX1"/>
<dbReference type="PhosphoSitePlus" id="Q68FX1"/>
<dbReference type="jPOST" id="Q68FX1"/>
<dbReference type="PaxDb" id="10116-ENSRNOP00000025783"/>
<dbReference type="Ensembl" id="ENSRNOT00000025783.6">
    <property type="protein sequence ID" value="ENSRNOP00000025783.4"/>
    <property type="gene ID" value="ENSRNOG00000018898.6"/>
</dbReference>
<dbReference type="GeneID" id="300741"/>
<dbReference type="KEGG" id="rno:300741"/>
<dbReference type="UCSC" id="RGD:3107">
    <property type="organism name" value="rat"/>
</dbReference>
<dbReference type="AGR" id="RGD:3107"/>
<dbReference type="CTD" id="4351"/>
<dbReference type="RGD" id="3107">
    <property type="gene designation" value="Mpi"/>
</dbReference>
<dbReference type="eggNOG" id="KOG2757">
    <property type="taxonomic scope" value="Eukaryota"/>
</dbReference>
<dbReference type="GeneTree" id="ENSGT00390000016075"/>
<dbReference type="HOGENOM" id="CLU_026967_2_0_1"/>
<dbReference type="InParanoid" id="Q68FX1"/>
<dbReference type="OMA" id="DIGLFCG"/>
<dbReference type="OrthoDB" id="20542at9989"/>
<dbReference type="PhylomeDB" id="Q68FX1"/>
<dbReference type="TreeFam" id="TF312831"/>
<dbReference type="Reactome" id="R-RNO-446205">
    <property type="pathway name" value="Synthesis of GDP-mannose"/>
</dbReference>
<dbReference type="SABIO-RK" id="Q68FX1"/>
<dbReference type="UniPathway" id="UPA00126">
    <property type="reaction ID" value="UER00423"/>
</dbReference>
<dbReference type="PRO" id="PR:Q68FX1"/>
<dbReference type="Proteomes" id="UP000002494">
    <property type="component" value="Chromosome 8"/>
</dbReference>
<dbReference type="Bgee" id="ENSRNOG00000018898">
    <property type="expression patterns" value="Expressed in skeletal muscle tissue and 20 other cell types or tissues"/>
</dbReference>
<dbReference type="GO" id="GO:0005829">
    <property type="term" value="C:cytosol"/>
    <property type="evidence" value="ECO:0000266"/>
    <property type="project" value="RGD"/>
</dbReference>
<dbReference type="GO" id="GO:0004476">
    <property type="term" value="F:mannose-6-phosphate isomerase activity"/>
    <property type="evidence" value="ECO:0000250"/>
    <property type="project" value="UniProtKB"/>
</dbReference>
<dbReference type="GO" id="GO:0008270">
    <property type="term" value="F:zinc ion binding"/>
    <property type="evidence" value="ECO:0007669"/>
    <property type="project" value="InterPro"/>
</dbReference>
<dbReference type="GO" id="GO:0061729">
    <property type="term" value="P:GDP-D-mannose biosynthetic process from fructose-6-phosphate"/>
    <property type="evidence" value="ECO:0000266"/>
    <property type="project" value="RGD"/>
</dbReference>
<dbReference type="GO" id="GO:0009298">
    <property type="term" value="P:GDP-mannose biosynthetic process"/>
    <property type="evidence" value="ECO:0000318"/>
    <property type="project" value="GO_Central"/>
</dbReference>
<dbReference type="GO" id="GO:0061611">
    <property type="term" value="P:mannose to fructose-6-phosphate catabolic process"/>
    <property type="evidence" value="ECO:0000250"/>
    <property type="project" value="UniProtKB"/>
</dbReference>
<dbReference type="CDD" id="cd07011">
    <property type="entry name" value="cupin_PMI_type_I_N"/>
    <property type="match status" value="1"/>
</dbReference>
<dbReference type="FunFam" id="1.10.441.10:FF:000001">
    <property type="entry name" value="Mannose-6-phosphate isomerase"/>
    <property type="match status" value="1"/>
</dbReference>
<dbReference type="FunFam" id="2.60.120.10:FF:000044">
    <property type="entry name" value="Mannose-6-phosphate isomerase"/>
    <property type="match status" value="1"/>
</dbReference>
<dbReference type="FunFam" id="2.60.120.10:FF:000060">
    <property type="entry name" value="Putative mannose-6-phosphate isomerase"/>
    <property type="match status" value="1"/>
</dbReference>
<dbReference type="Gene3D" id="2.60.120.10">
    <property type="entry name" value="Jelly Rolls"/>
    <property type="match status" value="2"/>
</dbReference>
<dbReference type="Gene3D" id="1.10.441.10">
    <property type="entry name" value="Phosphomannose Isomerase, domain 2"/>
    <property type="match status" value="1"/>
</dbReference>
<dbReference type="InterPro" id="IPR001250">
    <property type="entry name" value="Man6P_Isoase-1"/>
</dbReference>
<dbReference type="InterPro" id="IPR016305">
    <property type="entry name" value="Mannose-6-P_Isomerase"/>
</dbReference>
<dbReference type="InterPro" id="IPR018050">
    <property type="entry name" value="Pmannose_isomerase-type1_CS"/>
</dbReference>
<dbReference type="InterPro" id="IPR046456">
    <property type="entry name" value="PMI_typeI_C"/>
</dbReference>
<dbReference type="InterPro" id="IPR046457">
    <property type="entry name" value="PMI_typeI_cat"/>
</dbReference>
<dbReference type="InterPro" id="IPR046458">
    <property type="entry name" value="PMI_typeI_hel"/>
</dbReference>
<dbReference type="InterPro" id="IPR014710">
    <property type="entry name" value="RmlC-like_jellyroll"/>
</dbReference>
<dbReference type="InterPro" id="IPR011051">
    <property type="entry name" value="RmlC_Cupin_sf"/>
</dbReference>
<dbReference type="NCBIfam" id="TIGR00218">
    <property type="entry name" value="manA"/>
    <property type="match status" value="1"/>
</dbReference>
<dbReference type="PANTHER" id="PTHR10309">
    <property type="entry name" value="MANNOSE-6-PHOSPHATE ISOMERASE"/>
    <property type="match status" value="1"/>
</dbReference>
<dbReference type="PANTHER" id="PTHR10309:SF0">
    <property type="entry name" value="MANNOSE-6-PHOSPHATE ISOMERASE"/>
    <property type="match status" value="1"/>
</dbReference>
<dbReference type="Pfam" id="PF01238">
    <property type="entry name" value="PMI_typeI_C"/>
    <property type="match status" value="1"/>
</dbReference>
<dbReference type="Pfam" id="PF20511">
    <property type="entry name" value="PMI_typeI_cat"/>
    <property type="match status" value="1"/>
</dbReference>
<dbReference type="Pfam" id="PF20512">
    <property type="entry name" value="PMI_typeI_hel"/>
    <property type="match status" value="1"/>
</dbReference>
<dbReference type="PIRSF" id="PIRSF001480">
    <property type="entry name" value="Mannose-6-phosphate_isomerase"/>
    <property type="match status" value="1"/>
</dbReference>
<dbReference type="PRINTS" id="PR00714">
    <property type="entry name" value="MAN6PISMRASE"/>
</dbReference>
<dbReference type="SUPFAM" id="SSF51182">
    <property type="entry name" value="RmlC-like cupins"/>
    <property type="match status" value="1"/>
</dbReference>
<dbReference type="PROSITE" id="PS00965">
    <property type="entry name" value="PMI_I_1"/>
    <property type="match status" value="1"/>
</dbReference>
<dbReference type="PROSITE" id="PS00966">
    <property type="entry name" value="PMI_I_2"/>
    <property type="match status" value="1"/>
</dbReference>
<gene>
    <name evidence="6" type="primary">Mpi</name>
</gene>
<accession>Q68FX1</accession>
<sequence length="423" mass="46424">MANPRVFPLSCVVQQYAWGKVGSKSEVACLLACSDPLTQISEDKPYAELWMGAHPRGDAKILDNRISQKTLGQWIAENQNSLGQKVKDTFNGKLPFLFKVLSVETALSIQAHPNKELAEKLHLQAPEHYPDANHKPEMAIALTPFQGLCGFRPVEEIVTFLKKVPEFQSLIGEDATAQLKKSMNEGSGAMASALKNCFSHLMKSEKKVVVEQLNLLVKRISQQISNGNSMDDICGELLLQLHQQYPGDIGCFAIYLLNLITLKPGEAMFLEANVPHAYLKGDCVECMACSDNTVRAGLTPKFIDVSTLCEMLDYTPSPSKDRLFAPTLSQDDPYLSIYDPPVPDFTVMKIEVPGSVTEYKVLTLDSASILLLVQGTVTAIIPSVQGEIPLSRGGVLFIGANETVLLKLTVPKNLLIFRACCLL</sequence>
<organism>
    <name type="scientific">Rattus norvegicus</name>
    <name type="common">Rat</name>
    <dbReference type="NCBI Taxonomy" id="10116"/>
    <lineage>
        <taxon>Eukaryota</taxon>
        <taxon>Metazoa</taxon>
        <taxon>Chordata</taxon>
        <taxon>Craniata</taxon>
        <taxon>Vertebrata</taxon>
        <taxon>Euteleostomi</taxon>
        <taxon>Mammalia</taxon>
        <taxon>Eutheria</taxon>
        <taxon>Euarchontoglires</taxon>
        <taxon>Glires</taxon>
        <taxon>Rodentia</taxon>
        <taxon>Myomorpha</taxon>
        <taxon>Muroidea</taxon>
        <taxon>Muridae</taxon>
        <taxon>Murinae</taxon>
        <taxon>Rattus</taxon>
    </lineage>
</organism>
<feature type="initiator methionine" description="Removed" evidence="3">
    <location>
        <position position="1"/>
    </location>
</feature>
<feature type="chain" id="PRO_0000194238" description="Mannose-6-phosphate isomerase">
    <location>
        <begin position="2"/>
        <end position="423"/>
    </location>
</feature>
<feature type="active site" evidence="1">
    <location>
        <position position="295"/>
    </location>
</feature>
<feature type="binding site" evidence="1">
    <location>
        <position position="110"/>
    </location>
    <ligand>
        <name>Zn(2+)</name>
        <dbReference type="ChEBI" id="CHEBI:29105"/>
    </ligand>
</feature>
<feature type="binding site" evidence="1">
    <location>
        <position position="112"/>
    </location>
    <ligand>
        <name>Zn(2+)</name>
        <dbReference type="ChEBI" id="CHEBI:29105"/>
    </ligand>
</feature>
<feature type="binding site" evidence="1">
    <location>
        <position position="137"/>
    </location>
    <ligand>
        <name>Zn(2+)</name>
        <dbReference type="ChEBI" id="CHEBI:29105"/>
    </ligand>
</feature>
<feature type="binding site" evidence="1">
    <location>
        <position position="276"/>
    </location>
    <ligand>
        <name>Zn(2+)</name>
        <dbReference type="ChEBI" id="CHEBI:29105"/>
    </ligand>
</feature>
<feature type="modified residue" description="N-acetylalanine" evidence="3">
    <location>
        <position position="2"/>
    </location>
</feature>
<feature type="modified residue" description="Phosphoserine" evidence="3">
    <location>
        <position position="102"/>
    </location>
</feature>
<feature type="modified residue" description="Phosphoserine" evidence="3">
    <location>
        <position position="108"/>
    </location>
</feature>
<proteinExistence type="evidence at transcript level"/>
<comment type="function">
    <text evidence="3">Isomerase that catalyzes the interconversion of fructose-6-P and mannose-6-P and has a critical role in the supply of D-mannose derivatives required for many eukaryotic glycosylation reactions.</text>
</comment>
<comment type="catalytic activity">
    <reaction evidence="3">
        <text>D-mannose 6-phosphate = D-fructose 6-phosphate</text>
        <dbReference type="Rhea" id="RHEA:12356"/>
        <dbReference type="ChEBI" id="CHEBI:58735"/>
        <dbReference type="ChEBI" id="CHEBI:61527"/>
        <dbReference type="EC" id="5.3.1.8"/>
    </reaction>
</comment>
<comment type="cofactor">
    <cofactor evidence="2">
        <name>Zn(2+)</name>
        <dbReference type="ChEBI" id="CHEBI:29105"/>
    </cofactor>
    <text evidence="2">Binds 1 zinc ion per subunit.</text>
</comment>
<comment type="pathway">
    <text>Nucleotide-sugar biosynthesis; GDP-alpha-D-mannose biosynthesis; alpha-D-mannose 1-phosphate from D-fructose 6-phosphate: step 1/2.</text>
</comment>
<comment type="subcellular location">
    <subcellularLocation>
        <location evidence="4">Cytoplasm</location>
    </subcellularLocation>
</comment>
<comment type="similarity">
    <text evidence="5">Belongs to the mannose-6-phosphate isomerase type 1 family.</text>
</comment>